<evidence type="ECO:0000255" key="1">
    <source>
        <dbReference type="HAMAP-Rule" id="MF_01201"/>
    </source>
</evidence>
<evidence type="ECO:0000269" key="2">
    <source>
    </source>
</evidence>
<evidence type="ECO:0000305" key="3"/>
<evidence type="ECO:0007829" key="4">
    <source>
        <dbReference type="PDB" id="3S46"/>
    </source>
</evidence>
<reference key="1">
    <citation type="submission" date="1999-07" db="EMBL/GenBank/DDBJ databases">
        <authorList>
            <person name="Guynn L.J."/>
            <person name="Strych U."/>
            <person name="Benedik M.J."/>
        </authorList>
    </citation>
    <scope>NUCLEOTIDE SEQUENCE [GENOMIC DNA]</scope>
</reference>
<reference key="2">
    <citation type="journal article" date="2001" name="Science">
        <title>Complete genome sequence of a virulent isolate of Streptococcus pneumoniae.</title>
        <authorList>
            <person name="Tettelin H."/>
            <person name="Nelson K.E."/>
            <person name="Paulsen I.T."/>
            <person name="Eisen J.A."/>
            <person name="Read T.D."/>
            <person name="Peterson S.N."/>
            <person name="Heidelberg J.F."/>
            <person name="DeBoy R.T."/>
            <person name="Haft D.H."/>
            <person name="Dodson R.J."/>
            <person name="Durkin A.S."/>
            <person name="Gwinn M.L."/>
            <person name="Kolonay J.F."/>
            <person name="Nelson W.C."/>
            <person name="Peterson J.D."/>
            <person name="Umayam L.A."/>
            <person name="White O."/>
            <person name="Salzberg S.L."/>
            <person name="Lewis M.R."/>
            <person name="Radune D."/>
            <person name="Holtzapple E.K."/>
            <person name="Khouri H.M."/>
            <person name="Wolf A.M."/>
            <person name="Utterback T.R."/>
            <person name="Hansen C.L."/>
            <person name="McDonald L.A."/>
            <person name="Feldblyum T.V."/>
            <person name="Angiuoli S.V."/>
            <person name="Dickinson T."/>
            <person name="Hickey E.K."/>
            <person name="Holt I.E."/>
            <person name="Loftus B.J."/>
            <person name="Yang F."/>
            <person name="Smith H.O."/>
            <person name="Venter J.C."/>
            <person name="Dougherty B.A."/>
            <person name="Morrison D.A."/>
            <person name="Hollingshead S.K."/>
            <person name="Fraser C.M."/>
        </authorList>
    </citation>
    <scope>NUCLEOTIDE SEQUENCE [LARGE SCALE GENOMIC DNA]</scope>
    <source>
        <strain>ATCC BAA-334 / TIGR4</strain>
    </source>
</reference>
<reference key="3">
    <citation type="journal article" date="1996" name="Mol. Microbiol.">
        <title>The mmsA locus of Streptococcus pneumoniae encodes a RecG-like protein involved in DNA repair and in three-strand recombination.</title>
        <authorList>
            <person name="Martin B."/>
            <person name="Sharples G.J."/>
            <person name="Humbert O."/>
            <person name="Lloyd R.G."/>
            <person name="Claverys J.-P."/>
        </authorList>
    </citation>
    <scope>NUCLEOTIDE SEQUENCE [GENOMIC DNA] OF 257-367</scope>
</reference>
<reference key="4">
    <citation type="journal article" date="2011" name="BMC Microbiol.">
        <title>The crystal structure of alanine racemase from Streptococcus pneumoniae, a target for structure-based drug design.</title>
        <authorList>
            <person name="Im H."/>
            <person name="Sharpe M.L."/>
            <person name="Strych U."/>
            <person name="Davlieva M."/>
            <person name="Krause K.L."/>
        </authorList>
    </citation>
    <scope>X-RAY CRYSTALLOGRAPHY (2.00 ANGSTROMS) IN COMPLEX WITH PYRIDOXAL PHOSPHATE</scope>
    <scope>COFACTOR</scope>
    <scope>SUBUNIT</scope>
    <scope>PYRIDOXAL PHOSPHATE AT LYS-40</scope>
    <scope>CARBOXYLATION AT LYS-129</scope>
</reference>
<feature type="chain" id="PRO_0000114581" description="Alanine racemase">
    <location>
        <begin position="1"/>
        <end position="367"/>
    </location>
</feature>
<feature type="active site" description="Proton acceptor; specific for D-alanine" evidence="1">
    <location>
        <position position="40"/>
    </location>
</feature>
<feature type="active site" description="Proton acceptor; specific for L-alanine" evidence="1">
    <location>
        <position position="263"/>
    </location>
</feature>
<feature type="binding site" evidence="1">
    <location>
        <position position="136"/>
    </location>
    <ligand>
        <name>substrate</name>
    </ligand>
</feature>
<feature type="binding site" evidence="1">
    <location>
        <position position="310"/>
    </location>
    <ligand>
        <name>substrate</name>
    </ligand>
</feature>
<feature type="modified residue" description="N6-(pyridoxal phosphate)lysine">
    <location>
        <position position="40"/>
    </location>
</feature>
<feature type="modified residue" description="N6-carboxylysine" evidence="2">
    <location>
        <position position="129"/>
    </location>
</feature>
<feature type="sequence conflict" description="In Ref. 3; CAA90279." evidence="3" ref="3">
    <original>V</original>
    <variation>E</variation>
    <location>
        <position position="354"/>
    </location>
</feature>
<feature type="strand" evidence="4">
    <location>
        <begin position="10"/>
        <end position="14"/>
    </location>
</feature>
<feature type="helix" evidence="4">
    <location>
        <begin position="15"/>
        <end position="27"/>
    </location>
</feature>
<feature type="strand" evidence="4">
    <location>
        <begin position="34"/>
        <end position="38"/>
    </location>
</feature>
<feature type="turn" evidence="4">
    <location>
        <begin position="42"/>
        <end position="46"/>
    </location>
</feature>
<feature type="helix" evidence="4">
    <location>
        <begin position="48"/>
        <end position="55"/>
    </location>
</feature>
<feature type="helix" evidence="4">
    <location>
        <begin position="56"/>
        <end position="58"/>
    </location>
</feature>
<feature type="strand" evidence="4">
    <location>
        <begin position="60"/>
        <end position="66"/>
    </location>
</feature>
<feature type="helix" evidence="4">
    <location>
        <begin position="67"/>
        <end position="75"/>
    </location>
</feature>
<feature type="strand" evidence="4">
    <location>
        <begin position="82"/>
        <end position="87"/>
    </location>
</feature>
<feature type="helix" evidence="4">
    <location>
        <begin position="90"/>
        <end position="92"/>
    </location>
</feature>
<feature type="helix" evidence="4">
    <location>
        <begin position="93"/>
        <end position="98"/>
    </location>
</feature>
<feature type="strand" evidence="4">
    <location>
        <begin position="102"/>
        <end position="105"/>
    </location>
</feature>
<feature type="helix" evidence="4">
    <location>
        <begin position="108"/>
        <end position="116"/>
    </location>
</feature>
<feature type="strand" evidence="4">
    <location>
        <begin position="125"/>
        <end position="130"/>
    </location>
</feature>
<feature type="strand" evidence="4">
    <location>
        <begin position="136"/>
        <end position="139"/>
    </location>
</feature>
<feature type="helix" evidence="4">
    <location>
        <begin position="142"/>
        <end position="154"/>
    </location>
</feature>
<feature type="strand" evidence="4">
    <location>
        <begin position="158"/>
        <end position="164"/>
    </location>
</feature>
<feature type="helix" evidence="4">
    <location>
        <begin position="175"/>
        <end position="189"/>
    </location>
</feature>
<feature type="strand" evidence="4">
    <location>
        <begin position="196"/>
        <end position="201"/>
    </location>
</feature>
<feature type="helix" evidence="4">
    <location>
        <begin position="203"/>
        <end position="208"/>
    </location>
</feature>
<feature type="helix" evidence="4">
    <location>
        <begin position="210"/>
        <end position="212"/>
    </location>
</feature>
<feature type="strand" evidence="4">
    <location>
        <begin position="215"/>
        <end position="219"/>
    </location>
</feature>
<feature type="helix" evidence="4">
    <location>
        <begin position="221"/>
        <end position="224"/>
    </location>
</feature>
<feature type="turn" evidence="4">
    <location>
        <begin position="228"/>
        <end position="231"/>
    </location>
</feature>
<feature type="strand" evidence="4">
    <location>
        <begin position="243"/>
        <end position="248"/>
    </location>
</feature>
<feature type="strand" evidence="4">
    <location>
        <begin position="250"/>
        <end position="255"/>
    </location>
</feature>
<feature type="strand" evidence="4">
    <location>
        <begin position="260"/>
        <end position="262"/>
    </location>
</feature>
<feature type="helix" evidence="4">
    <location>
        <begin position="263"/>
        <end position="265"/>
    </location>
</feature>
<feature type="strand" evidence="4">
    <location>
        <begin position="273"/>
        <end position="279"/>
    </location>
</feature>
<feature type="helix" evidence="4">
    <location>
        <begin position="282"/>
        <end position="284"/>
    </location>
</feature>
<feature type="helix" evidence="4">
    <location>
        <begin position="288"/>
        <end position="290"/>
    </location>
</feature>
<feature type="strand" evidence="4">
    <location>
        <begin position="294"/>
        <end position="297"/>
    </location>
</feature>
<feature type="strand" evidence="4">
    <location>
        <begin position="300"/>
        <end position="304"/>
    </location>
</feature>
<feature type="strand" evidence="4">
    <location>
        <begin position="313"/>
        <end position="319"/>
    </location>
</feature>
<feature type="strand" evidence="4">
    <location>
        <begin position="326"/>
        <end position="333"/>
    </location>
</feature>
<feature type="strand" evidence="4">
    <location>
        <begin position="336"/>
        <end position="338"/>
    </location>
</feature>
<feature type="helix" evidence="4">
    <location>
        <begin position="340"/>
        <end position="347"/>
    </location>
</feature>
<feature type="helix" evidence="4">
    <location>
        <begin position="351"/>
        <end position="356"/>
    </location>
</feature>
<feature type="strand" evidence="4">
    <location>
        <begin position="364"/>
        <end position="367"/>
    </location>
</feature>
<name>ALR_STRPN</name>
<protein>
    <recommendedName>
        <fullName evidence="1">Alanine racemase</fullName>
        <ecNumber evidence="1">5.1.1.1</ecNumber>
    </recommendedName>
</protein>
<keyword id="KW-0002">3D-structure</keyword>
<keyword id="KW-0413">Isomerase</keyword>
<keyword id="KW-0663">Pyridoxal phosphate</keyword>
<keyword id="KW-1185">Reference proteome</keyword>
<accession>P0A2W8</accession>
<accession>Q54899</accession>
<accession>Q9S3V7</accession>
<proteinExistence type="evidence at protein level"/>
<gene>
    <name type="primary">alr</name>
    <name type="synonym">alaR</name>
    <name type="ordered locus">SP_1698</name>
</gene>
<comment type="function">
    <text evidence="1">Catalyzes the interconversion of L-alanine and D-alanine. May also act on other amino acids.</text>
</comment>
<comment type="catalytic activity">
    <reaction evidence="1">
        <text>L-alanine = D-alanine</text>
        <dbReference type="Rhea" id="RHEA:20249"/>
        <dbReference type="ChEBI" id="CHEBI:57416"/>
        <dbReference type="ChEBI" id="CHEBI:57972"/>
        <dbReference type="EC" id="5.1.1.1"/>
    </reaction>
</comment>
<comment type="cofactor">
    <cofactor evidence="1 2">
        <name>pyridoxal 5'-phosphate</name>
        <dbReference type="ChEBI" id="CHEBI:597326"/>
    </cofactor>
</comment>
<comment type="pathway">
    <text evidence="1">Amino-acid biosynthesis; D-alanine biosynthesis; D-alanine from L-alanine: step 1/1.</text>
</comment>
<comment type="subunit">
    <text evidence="2">Homodimer.</text>
</comment>
<comment type="similarity">
    <text evidence="1">Belongs to the alanine racemase family.</text>
</comment>
<dbReference type="EC" id="5.1.1.1" evidence="1"/>
<dbReference type="EMBL" id="AF171873">
    <property type="protein sequence ID" value="AAD51027.1"/>
    <property type="molecule type" value="Genomic_DNA"/>
</dbReference>
<dbReference type="EMBL" id="AE005672">
    <property type="protein sequence ID" value="AAK75776.1"/>
    <property type="molecule type" value="Genomic_DNA"/>
</dbReference>
<dbReference type="EMBL" id="Z49988">
    <property type="protein sequence ID" value="CAA90279.1"/>
    <property type="molecule type" value="Genomic_DNA"/>
</dbReference>
<dbReference type="PIR" id="G95197">
    <property type="entry name" value="G95197"/>
</dbReference>
<dbReference type="PIR" id="S71015">
    <property type="entry name" value="S71015"/>
</dbReference>
<dbReference type="RefSeq" id="WP_000648075.1">
    <property type="nucleotide sequence ID" value="NZ_CP155539.1"/>
</dbReference>
<dbReference type="PDB" id="3S46">
    <property type="method" value="X-ray"/>
    <property type="resolution" value="2.00 A"/>
    <property type="chains" value="A/B=1-367"/>
</dbReference>
<dbReference type="PDBsum" id="3S46"/>
<dbReference type="SMR" id="P0A2W8"/>
<dbReference type="PaxDb" id="170187-SP_1698"/>
<dbReference type="EnsemblBacteria" id="AAK75776">
    <property type="protein sequence ID" value="AAK75776"/>
    <property type="gene ID" value="SP_1698"/>
</dbReference>
<dbReference type="KEGG" id="spn:SP_1698"/>
<dbReference type="eggNOG" id="COG0787">
    <property type="taxonomic scope" value="Bacteria"/>
</dbReference>
<dbReference type="PhylomeDB" id="P0A2W8"/>
<dbReference type="BioCyc" id="SPNE170187:G1FZB-1721-MONOMER"/>
<dbReference type="BRENDA" id="5.1.1.1">
    <property type="organism ID" value="1960"/>
</dbReference>
<dbReference type="UniPathway" id="UPA00042">
    <property type="reaction ID" value="UER00497"/>
</dbReference>
<dbReference type="EvolutionaryTrace" id="P0A2W8"/>
<dbReference type="Proteomes" id="UP000000585">
    <property type="component" value="Chromosome"/>
</dbReference>
<dbReference type="GO" id="GO:0005829">
    <property type="term" value="C:cytosol"/>
    <property type="evidence" value="ECO:0007669"/>
    <property type="project" value="TreeGrafter"/>
</dbReference>
<dbReference type="GO" id="GO:0008784">
    <property type="term" value="F:alanine racemase activity"/>
    <property type="evidence" value="ECO:0007669"/>
    <property type="project" value="UniProtKB-UniRule"/>
</dbReference>
<dbReference type="GO" id="GO:0030170">
    <property type="term" value="F:pyridoxal phosphate binding"/>
    <property type="evidence" value="ECO:0007669"/>
    <property type="project" value="UniProtKB-UniRule"/>
</dbReference>
<dbReference type="GO" id="GO:0030632">
    <property type="term" value="P:D-alanine biosynthetic process"/>
    <property type="evidence" value="ECO:0007669"/>
    <property type="project" value="UniProtKB-UniRule"/>
</dbReference>
<dbReference type="GO" id="GO:0009252">
    <property type="term" value="P:peptidoglycan biosynthetic process"/>
    <property type="evidence" value="ECO:0007669"/>
    <property type="project" value="TreeGrafter"/>
</dbReference>
<dbReference type="CDD" id="cd00430">
    <property type="entry name" value="PLPDE_III_AR"/>
    <property type="match status" value="1"/>
</dbReference>
<dbReference type="FunFam" id="2.40.37.10:FF:000006">
    <property type="entry name" value="Alanine racemase"/>
    <property type="match status" value="1"/>
</dbReference>
<dbReference type="FunFam" id="3.20.20.10:FF:000002">
    <property type="entry name" value="Alanine racemase"/>
    <property type="match status" value="1"/>
</dbReference>
<dbReference type="Gene3D" id="3.20.20.10">
    <property type="entry name" value="Alanine racemase"/>
    <property type="match status" value="1"/>
</dbReference>
<dbReference type="Gene3D" id="2.40.37.10">
    <property type="entry name" value="Lyase, Ornithine Decarboxylase, Chain A, domain 1"/>
    <property type="match status" value="1"/>
</dbReference>
<dbReference type="HAMAP" id="MF_01201">
    <property type="entry name" value="Ala_racemase"/>
    <property type="match status" value="1"/>
</dbReference>
<dbReference type="InterPro" id="IPR000821">
    <property type="entry name" value="Ala_racemase"/>
</dbReference>
<dbReference type="InterPro" id="IPR009006">
    <property type="entry name" value="Ala_racemase/Decarboxylase_C"/>
</dbReference>
<dbReference type="InterPro" id="IPR011079">
    <property type="entry name" value="Ala_racemase_C"/>
</dbReference>
<dbReference type="InterPro" id="IPR001608">
    <property type="entry name" value="Ala_racemase_N"/>
</dbReference>
<dbReference type="InterPro" id="IPR020622">
    <property type="entry name" value="Ala_racemase_pyridoxalP-BS"/>
</dbReference>
<dbReference type="InterPro" id="IPR029066">
    <property type="entry name" value="PLP-binding_barrel"/>
</dbReference>
<dbReference type="NCBIfam" id="TIGR00492">
    <property type="entry name" value="alr"/>
    <property type="match status" value="1"/>
</dbReference>
<dbReference type="PANTHER" id="PTHR30511">
    <property type="entry name" value="ALANINE RACEMASE"/>
    <property type="match status" value="1"/>
</dbReference>
<dbReference type="PANTHER" id="PTHR30511:SF0">
    <property type="entry name" value="ALANINE RACEMASE, CATABOLIC-RELATED"/>
    <property type="match status" value="1"/>
</dbReference>
<dbReference type="Pfam" id="PF00842">
    <property type="entry name" value="Ala_racemase_C"/>
    <property type="match status" value="1"/>
</dbReference>
<dbReference type="Pfam" id="PF01168">
    <property type="entry name" value="Ala_racemase_N"/>
    <property type="match status" value="1"/>
</dbReference>
<dbReference type="PRINTS" id="PR00992">
    <property type="entry name" value="ALARACEMASE"/>
</dbReference>
<dbReference type="SMART" id="SM01005">
    <property type="entry name" value="Ala_racemase_C"/>
    <property type="match status" value="1"/>
</dbReference>
<dbReference type="SUPFAM" id="SSF50621">
    <property type="entry name" value="Alanine racemase C-terminal domain-like"/>
    <property type="match status" value="1"/>
</dbReference>
<dbReference type="SUPFAM" id="SSF51419">
    <property type="entry name" value="PLP-binding barrel"/>
    <property type="match status" value="1"/>
</dbReference>
<dbReference type="PROSITE" id="PS00395">
    <property type="entry name" value="ALANINE_RACEMASE"/>
    <property type="match status" value="1"/>
</dbReference>
<sequence length="367" mass="39858">MKASPHRPTKALIHLGAIRQNIQQMGAHIPQGTLKLAVVKANAYGHGAVAVAKAIQDDVDGFCVSNIDEAIELRQAGLSKPILILGVSEIEAVALAKEYDFTLTVAGLEWIQALLDKEVDLTGLTVHLKIDSGMGRIGFREASEVEQAQDLLQQHGVCVEGIFTHFATADEESDDYFNAQLERFKTILASMKEVPELVHASNSATTLWHVETIFNAVRMGDAMYGLNPSGAVLDLPYDLIPALTLESALVHVKTVPAGACMGYGATYQADSEQVIATVPIGYADGWTRDMQNFSVLVDGQACPIVGRVSMDQITIRLPKLYPLGTKVTLIGSNGDKEITATQVATYRVTINYEVVCLLSDRIPREYY</sequence>
<organism>
    <name type="scientific">Streptococcus pneumoniae serotype 4 (strain ATCC BAA-334 / TIGR4)</name>
    <dbReference type="NCBI Taxonomy" id="170187"/>
    <lineage>
        <taxon>Bacteria</taxon>
        <taxon>Bacillati</taxon>
        <taxon>Bacillota</taxon>
        <taxon>Bacilli</taxon>
        <taxon>Lactobacillales</taxon>
        <taxon>Streptococcaceae</taxon>
        <taxon>Streptococcus</taxon>
    </lineage>
</organism>